<gene>
    <name evidence="1" type="primary">minE</name>
    <name type="ordered locus">SSPA0987</name>
</gene>
<comment type="function">
    <text evidence="1">Prevents the cell division inhibition by proteins MinC and MinD at internal division sites while permitting inhibition at polar sites. This ensures cell division at the proper site by restricting the formation of a division septum at the midpoint of the long axis of the cell.</text>
</comment>
<comment type="similarity">
    <text evidence="1">Belongs to the MinE family.</text>
</comment>
<keyword id="KW-0131">Cell cycle</keyword>
<keyword id="KW-0132">Cell division</keyword>
<feature type="chain" id="PRO_1000114243" description="Cell division topological specificity factor">
    <location>
        <begin position="1"/>
        <end position="88"/>
    </location>
</feature>
<evidence type="ECO:0000255" key="1">
    <source>
        <dbReference type="HAMAP-Rule" id="MF_00262"/>
    </source>
</evidence>
<name>MINE_SALPK</name>
<reference key="1">
    <citation type="journal article" date="2009" name="BMC Genomics">
        <title>Pseudogene accumulation in the evolutionary histories of Salmonella enterica serovars Paratyphi A and Typhi.</title>
        <authorList>
            <person name="Holt K.E."/>
            <person name="Thomson N.R."/>
            <person name="Wain J."/>
            <person name="Langridge G.C."/>
            <person name="Hasan R."/>
            <person name="Bhutta Z.A."/>
            <person name="Quail M.A."/>
            <person name="Norbertczak H."/>
            <person name="Walker D."/>
            <person name="Simmonds M."/>
            <person name="White B."/>
            <person name="Bason N."/>
            <person name="Mungall K."/>
            <person name="Dougan G."/>
            <person name="Parkhill J."/>
        </authorList>
    </citation>
    <scope>NUCLEOTIDE SEQUENCE [LARGE SCALE GENOMIC DNA]</scope>
    <source>
        <strain>AKU_12601</strain>
    </source>
</reference>
<sequence length="88" mass="10182">MALLDFFLSRKKSTANIAKERLQIIVAERRRSDAEPHYLPQLRKDILEVICKYVQIDPEMVTVQLEQKDGDISILELNVTLPEAEESK</sequence>
<accession>B5BHE0</accession>
<protein>
    <recommendedName>
        <fullName evidence="1">Cell division topological specificity factor</fullName>
    </recommendedName>
</protein>
<organism>
    <name type="scientific">Salmonella paratyphi A (strain AKU_12601)</name>
    <dbReference type="NCBI Taxonomy" id="554290"/>
    <lineage>
        <taxon>Bacteria</taxon>
        <taxon>Pseudomonadati</taxon>
        <taxon>Pseudomonadota</taxon>
        <taxon>Gammaproteobacteria</taxon>
        <taxon>Enterobacterales</taxon>
        <taxon>Enterobacteriaceae</taxon>
        <taxon>Salmonella</taxon>
    </lineage>
</organism>
<dbReference type="EMBL" id="FM200053">
    <property type="protein sequence ID" value="CAR59138.1"/>
    <property type="molecule type" value="Genomic_DNA"/>
</dbReference>
<dbReference type="RefSeq" id="WP_001185666.1">
    <property type="nucleotide sequence ID" value="NC_011147.1"/>
</dbReference>
<dbReference type="SMR" id="B5BHE0"/>
<dbReference type="GeneID" id="92972923"/>
<dbReference type="KEGG" id="sek:SSPA0987"/>
<dbReference type="HOGENOM" id="CLU_137929_2_2_6"/>
<dbReference type="Proteomes" id="UP000001869">
    <property type="component" value="Chromosome"/>
</dbReference>
<dbReference type="GO" id="GO:0051301">
    <property type="term" value="P:cell division"/>
    <property type="evidence" value="ECO:0007669"/>
    <property type="project" value="UniProtKB-KW"/>
</dbReference>
<dbReference type="GO" id="GO:0032955">
    <property type="term" value="P:regulation of division septum assembly"/>
    <property type="evidence" value="ECO:0007669"/>
    <property type="project" value="InterPro"/>
</dbReference>
<dbReference type="FunFam" id="3.30.1070.10:FF:000001">
    <property type="entry name" value="Cell division topological specificity factor"/>
    <property type="match status" value="1"/>
</dbReference>
<dbReference type="Gene3D" id="3.30.1070.10">
    <property type="entry name" value="Cell division topological specificity factor MinE"/>
    <property type="match status" value="1"/>
</dbReference>
<dbReference type="HAMAP" id="MF_00262">
    <property type="entry name" value="MinE"/>
    <property type="match status" value="1"/>
</dbReference>
<dbReference type="InterPro" id="IPR005527">
    <property type="entry name" value="MinE"/>
</dbReference>
<dbReference type="InterPro" id="IPR036707">
    <property type="entry name" value="MinE_sf"/>
</dbReference>
<dbReference type="NCBIfam" id="TIGR01215">
    <property type="entry name" value="minE"/>
    <property type="match status" value="1"/>
</dbReference>
<dbReference type="NCBIfam" id="NF001422">
    <property type="entry name" value="PRK00296.1"/>
    <property type="match status" value="1"/>
</dbReference>
<dbReference type="Pfam" id="PF03776">
    <property type="entry name" value="MinE"/>
    <property type="match status" value="1"/>
</dbReference>
<dbReference type="SUPFAM" id="SSF55229">
    <property type="entry name" value="Cell division protein MinE topological specificity domain"/>
    <property type="match status" value="1"/>
</dbReference>
<proteinExistence type="inferred from homology"/>